<keyword id="KW-0007">Acetylation</keyword>
<keyword id="KW-0464">Manganese</keyword>
<keyword id="KW-0479">Metal-binding</keyword>
<keyword id="KW-0496">Mitochondrion</keyword>
<keyword id="KW-0944">Nitration</keyword>
<keyword id="KW-0560">Oxidoreductase</keyword>
<keyword id="KW-1185">Reference proteome</keyword>
<keyword id="KW-0832">Ubl conjugation</keyword>
<reference key="1">
    <citation type="journal article" date="2002" name="Gene">
        <title>Structure, molecular evolution, and gene expression of primate superoxide dismutases.</title>
        <authorList>
            <person name="Fukuhara R."/>
            <person name="Tezuka T."/>
            <person name="Kageyama T."/>
        </authorList>
    </citation>
    <scope>NUCLEOTIDE SEQUENCE [MRNA]</scope>
</reference>
<comment type="function">
    <text evidence="3">Destroys superoxide anion radicals which are normally produced within the cells and which are toxic to biological systems.</text>
</comment>
<comment type="catalytic activity">
    <reaction>
        <text>2 superoxide + 2 H(+) = H2O2 + O2</text>
        <dbReference type="Rhea" id="RHEA:20696"/>
        <dbReference type="ChEBI" id="CHEBI:15378"/>
        <dbReference type="ChEBI" id="CHEBI:15379"/>
        <dbReference type="ChEBI" id="CHEBI:16240"/>
        <dbReference type="ChEBI" id="CHEBI:18421"/>
        <dbReference type="EC" id="1.15.1.1"/>
    </reaction>
</comment>
<comment type="cofactor">
    <cofactor evidence="2">
        <name>Mn(2+)</name>
        <dbReference type="ChEBI" id="CHEBI:29035"/>
    </cofactor>
    <text evidence="2">Binds 1 Mn(2+) ion per subunit.</text>
</comment>
<comment type="subunit">
    <text evidence="1">Homotetramer.</text>
</comment>
<comment type="subcellular location">
    <subcellularLocation>
        <location evidence="1">Mitochondrion matrix</location>
    </subcellularLocation>
</comment>
<comment type="PTM">
    <text evidence="3">Nitrated under oxidative stress. Nitration coupled with oxidation inhibits the catalytic activity.</text>
</comment>
<comment type="PTM">
    <text evidence="2">Acetylation at Lys-98 decreases enzymatic activity. Deacetylated by SIRT3 upon exposure to ionizing radiations or after long fasting (By similarity).</text>
</comment>
<comment type="PTM">
    <text evidence="2">Polyubiquitinated; leading to proteasomal degradation. Deubiquitinated by USP36 which increases protein stability.</text>
</comment>
<comment type="similarity">
    <text evidence="5">Belongs to the iron/manganese superoxide dismutase family.</text>
</comment>
<comment type="sequence caution" evidence="5">
    <conflict type="erroneous initiation">
        <sequence resource="EMBL-CDS" id="BAC20358"/>
    </conflict>
    <text>Extended N-terminus.</text>
</comment>
<accession>Q8HXP2</accession>
<organism>
    <name type="scientific">Macaca mulatta</name>
    <name type="common">Rhesus macaque</name>
    <dbReference type="NCBI Taxonomy" id="9544"/>
    <lineage>
        <taxon>Eukaryota</taxon>
        <taxon>Metazoa</taxon>
        <taxon>Chordata</taxon>
        <taxon>Craniata</taxon>
        <taxon>Vertebrata</taxon>
        <taxon>Euteleostomi</taxon>
        <taxon>Mammalia</taxon>
        <taxon>Eutheria</taxon>
        <taxon>Euarchontoglires</taxon>
        <taxon>Primates</taxon>
        <taxon>Haplorrhini</taxon>
        <taxon>Catarrhini</taxon>
        <taxon>Cercopithecidae</taxon>
        <taxon>Cercopithecinae</taxon>
        <taxon>Macaca</taxon>
    </lineage>
</organism>
<sequence length="198" mass="22209">KHSLPDLPYDYGALEPHINAQIMQLHHSKHHAAYVNNLNVTEEKYQEALAKGDVTAQIALQPALKFNGGGHINHSIFWTNLSPNGGGEPKGELLEAIKRDFGSFEKFKEKLTAASVGVQGSGWGWLGFNKERGQLQIAACPNQDPLQGTTGLIPLLGIDVWEHAYYLQYKNVRPDYLKAIWNVINWENVTERYMACKK</sequence>
<gene>
    <name type="primary">SOD2</name>
</gene>
<evidence type="ECO:0000250" key="1"/>
<evidence type="ECO:0000250" key="2">
    <source>
        <dbReference type="UniProtKB" id="P04179"/>
    </source>
</evidence>
<evidence type="ECO:0000250" key="3">
    <source>
        <dbReference type="UniProtKB" id="P07895"/>
    </source>
</evidence>
<evidence type="ECO:0000250" key="4">
    <source>
        <dbReference type="UniProtKB" id="P09671"/>
    </source>
</evidence>
<evidence type="ECO:0000305" key="5"/>
<feature type="chain" id="PRO_0000159955" description="Superoxide dismutase [Mn], mitochondrial">
    <location>
        <begin position="1"/>
        <end position="198"/>
    </location>
</feature>
<feature type="binding site" evidence="1">
    <location>
        <position position="26"/>
    </location>
    <ligand>
        <name>Mn(2+)</name>
        <dbReference type="ChEBI" id="CHEBI:29035"/>
    </ligand>
</feature>
<feature type="binding site" evidence="1">
    <location>
        <position position="74"/>
    </location>
    <ligand>
        <name>Mn(2+)</name>
        <dbReference type="ChEBI" id="CHEBI:29035"/>
    </ligand>
</feature>
<feature type="binding site" evidence="1">
    <location>
        <position position="159"/>
    </location>
    <ligand>
        <name>Mn(2+)</name>
        <dbReference type="ChEBI" id="CHEBI:29035"/>
    </ligand>
</feature>
<feature type="binding site" evidence="1">
    <location>
        <position position="163"/>
    </location>
    <ligand>
        <name>Mn(2+)</name>
        <dbReference type="ChEBI" id="CHEBI:29035"/>
    </ligand>
</feature>
<feature type="modified residue" description="3'-nitrotyrosine" evidence="2">
    <location>
        <position position="34"/>
    </location>
</feature>
<feature type="modified residue" description="N6-acetyllysine; alternate" evidence="2">
    <location>
        <position position="44"/>
    </location>
</feature>
<feature type="modified residue" description="N6-succinyllysine; alternate" evidence="4">
    <location>
        <position position="44"/>
    </location>
</feature>
<feature type="modified residue" description="N6-acetyllysine; alternate" evidence="4">
    <location>
        <position position="51"/>
    </location>
</feature>
<feature type="modified residue" description="N6-succinyllysine; alternate" evidence="4">
    <location>
        <position position="51"/>
    </location>
</feature>
<feature type="modified residue" description="N6-acetyllysine" evidence="4">
    <location>
        <position position="90"/>
    </location>
</feature>
<feature type="modified residue" description="N6-acetyllysine; alternate" evidence="4">
    <location>
        <position position="98"/>
    </location>
</feature>
<feature type="modified residue" description="N6-succinyllysine; alternate" evidence="4">
    <location>
        <position position="98"/>
    </location>
</feature>
<feature type="modified residue" description="N6-acetyllysine; alternate" evidence="2">
    <location>
        <position position="106"/>
    </location>
</feature>
<feature type="modified residue" description="N6-succinyllysine; alternate" evidence="4">
    <location>
        <position position="106"/>
    </location>
</feature>
<feature type="modified residue" description="N6-acetyllysine" evidence="4">
    <location>
        <position position="178"/>
    </location>
</feature>
<name>SODM_MACMU</name>
<proteinExistence type="evidence at transcript level"/>
<dbReference type="EC" id="1.15.1.1"/>
<dbReference type="EMBL" id="AB087279">
    <property type="protein sequence ID" value="BAC20358.1"/>
    <property type="status" value="ALT_INIT"/>
    <property type="molecule type" value="mRNA"/>
</dbReference>
<dbReference type="SMR" id="Q8HXP2"/>
<dbReference type="STRING" id="9544.ENSMMUP00000079486"/>
<dbReference type="PaxDb" id="9544-ENSMMUP00000007739"/>
<dbReference type="eggNOG" id="KOG0876">
    <property type="taxonomic scope" value="Eukaryota"/>
</dbReference>
<dbReference type="HOGENOM" id="CLU_031625_3_0_1"/>
<dbReference type="InParanoid" id="Q8HXP2"/>
<dbReference type="OrthoDB" id="239262at2759"/>
<dbReference type="Proteomes" id="UP000006718">
    <property type="component" value="Unassembled WGS sequence"/>
</dbReference>
<dbReference type="GO" id="GO:0005759">
    <property type="term" value="C:mitochondrial matrix"/>
    <property type="evidence" value="ECO:0007669"/>
    <property type="project" value="UniProtKB-SubCell"/>
</dbReference>
<dbReference type="GO" id="GO:0005739">
    <property type="term" value="C:mitochondrion"/>
    <property type="evidence" value="ECO:0000318"/>
    <property type="project" value="GO_Central"/>
</dbReference>
<dbReference type="GO" id="GO:0030145">
    <property type="term" value="F:manganese ion binding"/>
    <property type="evidence" value="ECO:0000250"/>
    <property type="project" value="UniProtKB"/>
</dbReference>
<dbReference type="GO" id="GO:0004784">
    <property type="term" value="F:superoxide dismutase activity"/>
    <property type="evidence" value="ECO:0000250"/>
    <property type="project" value="UniProtKB"/>
</dbReference>
<dbReference type="GO" id="GO:0034599">
    <property type="term" value="P:cellular response to oxidative stress"/>
    <property type="evidence" value="ECO:0000250"/>
    <property type="project" value="UniProtKB"/>
</dbReference>
<dbReference type="GO" id="GO:0006357">
    <property type="term" value="P:regulation of transcription by RNA polymerase II"/>
    <property type="evidence" value="ECO:0000250"/>
    <property type="project" value="UniProtKB"/>
</dbReference>
<dbReference type="FunFam" id="1.10.287.990:FF:000001">
    <property type="entry name" value="Superoxide dismutase"/>
    <property type="match status" value="1"/>
</dbReference>
<dbReference type="FunFam" id="3.55.40.20:FF:000003">
    <property type="entry name" value="Superoxide dismutase [Mn], mitochondrial"/>
    <property type="match status" value="1"/>
</dbReference>
<dbReference type="Gene3D" id="1.10.287.990">
    <property type="entry name" value="Fe,Mn superoxide dismutase (SOD) domain"/>
    <property type="match status" value="1"/>
</dbReference>
<dbReference type="Gene3D" id="3.55.40.20">
    <property type="entry name" value="Iron/manganese superoxide dismutase, C-terminal domain"/>
    <property type="match status" value="1"/>
</dbReference>
<dbReference type="InterPro" id="IPR050265">
    <property type="entry name" value="Fe/Mn_Superoxide_Dismutase"/>
</dbReference>
<dbReference type="InterPro" id="IPR001189">
    <property type="entry name" value="Mn/Fe_SOD"/>
</dbReference>
<dbReference type="InterPro" id="IPR019833">
    <property type="entry name" value="Mn/Fe_SOD_BS"/>
</dbReference>
<dbReference type="InterPro" id="IPR019832">
    <property type="entry name" value="Mn/Fe_SOD_C"/>
</dbReference>
<dbReference type="InterPro" id="IPR019831">
    <property type="entry name" value="Mn/Fe_SOD_N"/>
</dbReference>
<dbReference type="InterPro" id="IPR036324">
    <property type="entry name" value="Mn/Fe_SOD_N_sf"/>
</dbReference>
<dbReference type="InterPro" id="IPR036314">
    <property type="entry name" value="SOD_C_sf"/>
</dbReference>
<dbReference type="PANTHER" id="PTHR11404">
    <property type="entry name" value="SUPEROXIDE DISMUTASE 2"/>
    <property type="match status" value="1"/>
</dbReference>
<dbReference type="PANTHER" id="PTHR11404:SF6">
    <property type="entry name" value="SUPEROXIDE DISMUTASE [MN], MITOCHONDRIAL"/>
    <property type="match status" value="1"/>
</dbReference>
<dbReference type="Pfam" id="PF02777">
    <property type="entry name" value="Sod_Fe_C"/>
    <property type="match status" value="1"/>
</dbReference>
<dbReference type="Pfam" id="PF00081">
    <property type="entry name" value="Sod_Fe_N"/>
    <property type="match status" value="1"/>
</dbReference>
<dbReference type="PIRSF" id="PIRSF000349">
    <property type="entry name" value="SODismutase"/>
    <property type="match status" value="1"/>
</dbReference>
<dbReference type="PRINTS" id="PR01703">
    <property type="entry name" value="MNSODISMTASE"/>
</dbReference>
<dbReference type="SUPFAM" id="SSF54719">
    <property type="entry name" value="Fe,Mn superoxide dismutase (SOD), C-terminal domain"/>
    <property type="match status" value="1"/>
</dbReference>
<dbReference type="SUPFAM" id="SSF46609">
    <property type="entry name" value="Fe,Mn superoxide dismutase (SOD), N-terminal domain"/>
    <property type="match status" value="1"/>
</dbReference>
<dbReference type="PROSITE" id="PS00088">
    <property type="entry name" value="SOD_MN"/>
    <property type="match status" value="1"/>
</dbReference>
<protein>
    <recommendedName>
        <fullName>Superoxide dismutase [Mn], mitochondrial</fullName>
        <ecNumber>1.15.1.1</ecNumber>
    </recommendedName>
</protein>